<dbReference type="EC" id="1.18.1.3"/>
<dbReference type="EMBL" id="X79076">
    <property type="protein sequence ID" value="CAA55683.1"/>
    <property type="molecule type" value="Genomic_DNA"/>
</dbReference>
<dbReference type="SMR" id="Q51603"/>
<dbReference type="KEGG" id="ag:CAA55683"/>
<dbReference type="BioCyc" id="MetaCyc:MONOMER-14765"/>
<dbReference type="UniPathway" id="UPA00233"/>
<dbReference type="GO" id="GO:0051537">
    <property type="term" value="F:2 iron, 2 sulfur cluster binding"/>
    <property type="evidence" value="ECO:0007669"/>
    <property type="project" value="UniProtKB-KW"/>
</dbReference>
<dbReference type="GO" id="GO:0008860">
    <property type="term" value="F:ferredoxin-NAD+ reductase activity"/>
    <property type="evidence" value="ECO:0007669"/>
    <property type="project" value="UniProtKB-EC"/>
</dbReference>
<dbReference type="GO" id="GO:0046872">
    <property type="term" value="F:metal ion binding"/>
    <property type="evidence" value="ECO:0007669"/>
    <property type="project" value="UniProtKB-KW"/>
</dbReference>
<dbReference type="GO" id="GO:0010128">
    <property type="term" value="P:benzoate catabolic process via CoA ligation"/>
    <property type="evidence" value="ECO:0007669"/>
    <property type="project" value="UniProtKB-UniPathway"/>
</dbReference>
<dbReference type="CDD" id="cd06209">
    <property type="entry name" value="BenDO_FAD_NAD"/>
    <property type="match status" value="1"/>
</dbReference>
<dbReference type="CDD" id="cd00207">
    <property type="entry name" value="fer2"/>
    <property type="match status" value="1"/>
</dbReference>
<dbReference type="Gene3D" id="3.10.20.30">
    <property type="match status" value="1"/>
</dbReference>
<dbReference type="Gene3D" id="3.40.50.80">
    <property type="entry name" value="Nucleotide-binding domain of ferredoxin-NADP reductase (FNR) module"/>
    <property type="match status" value="1"/>
</dbReference>
<dbReference type="Gene3D" id="2.40.30.10">
    <property type="entry name" value="Translation factors"/>
    <property type="match status" value="1"/>
</dbReference>
<dbReference type="InterPro" id="IPR036010">
    <property type="entry name" value="2Fe-2S_ferredoxin-like_sf"/>
</dbReference>
<dbReference type="InterPro" id="IPR001041">
    <property type="entry name" value="2Fe-2S_ferredoxin-type"/>
</dbReference>
<dbReference type="InterPro" id="IPR006058">
    <property type="entry name" value="2Fe2S_fd_BS"/>
</dbReference>
<dbReference type="InterPro" id="IPR047683">
    <property type="entry name" value="BenC-like_FAD_NAD-bd"/>
</dbReference>
<dbReference type="InterPro" id="IPR012675">
    <property type="entry name" value="Beta-grasp_dom_sf"/>
</dbReference>
<dbReference type="InterPro" id="IPR008333">
    <property type="entry name" value="Cbr1-like_FAD-bd_dom"/>
</dbReference>
<dbReference type="InterPro" id="IPR017927">
    <property type="entry name" value="FAD-bd_FR_type"/>
</dbReference>
<dbReference type="InterPro" id="IPR001709">
    <property type="entry name" value="Flavoprot_Pyr_Nucl_cyt_Rdtase"/>
</dbReference>
<dbReference type="InterPro" id="IPR039261">
    <property type="entry name" value="FNR_nucleotide-bd"/>
</dbReference>
<dbReference type="InterPro" id="IPR050415">
    <property type="entry name" value="MRET"/>
</dbReference>
<dbReference type="InterPro" id="IPR001433">
    <property type="entry name" value="OxRdtase_FAD/NAD-bd"/>
</dbReference>
<dbReference type="InterPro" id="IPR017938">
    <property type="entry name" value="Riboflavin_synthase-like_b-brl"/>
</dbReference>
<dbReference type="NCBIfam" id="NF040810">
    <property type="entry name" value="BenC"/>
    <property type="match status" value="1"/>
</dbReference>
<dbReference type="PANTHER" id="PTHR47354">
    <property type="entry name" value="NADH OXIDOREDUCTASE HCR"/>
    <property type="match status" value="1"/>
</dbReference>
<dbReference type="PANTHER" id="PTHR47354:SF5">
    <property type="entry name" value="PROTEIN RFBI"/>
    <property type="match status" value="1"/>
</dbReference>
<dbReference type="Pfam" id="PF00970">
    <property type="entry name" value="FAD_binding_6"/>
    <property type="match status" value="1"/>
</dbReference>
<dbReference type="Pfam" id="PF00111">
    <property type="entry name" value="Fer2"/>
    <property type="match status" value="1"/>
</dbReference>
<dbReference type="Pfam" id="PF00175">
    <property type="entry name" value="NAD_binding_1"/>
    <property type="match status" value="1"/>
</dbReference>
<dbReference type="PRINTS" id="PR00371">
    <property type="entry name" value="FPNCR"/>
</dbReference>
<dbReference type="PRINTS" id="PR00410">
    <property type="entry name" value="PHEHYDRXLASE"/>
</dbReference>
<dbReference type="SUPFAM" id="SSF54292">
    <property type="entry name" value="2Fe-2S ferredoxin-like"/>
    <property type="match status" value="1"/>
</dbReference>
<dbReference type="SUPFAM" id="SSF52343">
    <property type="entry name" value="Ferredoxin reductase-like, C-terminal NADP-linked domain"/>
    <property type="match status" value="1"/>
</dbReference>
<dbReference type="SUPFAM" id="SSF63380">
    <property type="entry name" value="Riboflavin synthase domain-like"/>
    <property type="match status" value="1"/>
</dbReference>
<dbReference type="PROSITE" id="PS00197">
    <property type="entry name" value="2FE2S_FER_1"/>
    <property type="match status" value="1"/>
</dbReference>
<dbReference type="PROSITE" id="PS51085">
    <property type="entry name" value="2FE2S_FER_2"/>
    <property type="match status" value="1"/>
</dbReference>
<dbReference type="PROSITE" id="PS51384">
    <property type="entry name" value="FAD_FR"/>
    <property type="match status" value="1"/>
</dbReference>
<proteinExistence type="evidence at protein level"/>
<reference key="1">
    <citation type="journal article" date="1995" name="J. Bacteriol.">
        <title>Cloning, nucleotide sequence, and expression of the plasmid-encoded genes for the two-component 2-halobenzoate 1,2-dioxygenase from Pseudomonas cepacia 2CBS.</title>
        <authorList>
            <person name="Haak B."/>
            <person name="Fetzner S."/>
            <person name="Lingens F."/>
        </authorList>
    </citation>
    <scope>NUCLEOTIDE SEQUENCE [GENOMIC DNA]</scope>
    <source>
        <strain>2CBS</strain>
    </source>
</reference>
<reference key="2">
    <citation type="journal article" date="1992" name="J. Bacteriol.">
        <title>Purification and some properties of 2-halobenzoate 1,2-dioxygenase, a two-component enzyme system from Pseudomonas cepacia 2CBS.</title>
        <authorList>
            <person name="Fetzner S."/>
            <person name="Mueller R."/>
            <person name="Lingens F."/>
        </authorList>
    </citation>
    <scope>PROTEIN SEQUENCE OF 1-19</scope>
    <scope>CHARACTERIZATION</scope>
    <source>
        <strain>2CBS</strain>
    </source>
</reference>
<accession>Q51603</accession>
<accession>O08068</accession>
<comment type="function">
    <text>Electron transfer component of 2-halobenzoate 1,2-dioxygenase system.</text>
</comment>
<comment type="catalytic activity">
    <reaction>
        <text>2 reduced [2Fe-2S]-[ferredoxin] + NAD(+) + H(+) = 2 oxidized [2Fe-2S]-[ferredoxin] + NADH</text>
        <dbReference type="Rhea" id="RHEA:16521"/>
        <dbReference type="Rhea" id="RHEA-COMP:10000"/>
        <dbReference type="Rhea" id="RHEA-COMP:10001"/>
        <dbReference type="ChEBI" id="CHEBI:15378"/>
        <dbReference type="ChEBI" id="CHEBI:33737"/>
        <dbReference type="ChEBI" id="CHEBI:33738"/>
        <dbReference type="ChEBI" id="CHEBI:57540"/>
        <dbReference type="ChEBI" id="CHEBI:57945"/>
        <dbReference type="EC" id="1.18.1.3"/>
    </reaction>
</comment>
<comment type="cofactor">
    <cofactor evidence="1">
        <name>FAD</name>
        <dbReference type="ChEBI" id="CHEBI:57692"/>
    </cofactor>
    <text evidence="1">Binds 1 FAD per subunit.</text>
</comment>
<comment type="cofactor">
    <cofactor evidence="1">
        <name>[2Fe-2S] cluster</name>
        <dbReference type="ChEBI" id="CHEBI:190135"/>
    </cofactor>
    <text evidence="1">Binds 1 [2Fe-2S] cluster per subunit.</text>
</comment>
<comment type="pathway">
    <text>Xenobiotic degradation; benzoate degradation via CoA ligation.</text>
</comment>
<comment type="subunit">
    <text>Monomer. It is part of 2-halobenzoate dioxygenase two component enzyme system. The other component is a dioxygenase component consisting of 3 large (CbdA) subunits and 3 small (CbdB) subunits.</text>
</comment>
<comment type="similarity">
    <text evidence="4">Belongs to the bacterial ring-hydroxylating dioxygenase ferredoxin reductase family.</text>
</comment>
<protein>
    <recommendedName>
        <fullName>2-halobenzoate 1,2-dioxygenase electron transfer component</fullName>
    </recommendedName>
    <domain>
        <recommendedName>
            <fullName>Ferredoxin</fullName>
        </recommendedName>
    </domain>
    <domain>
        <recommendedName>
            <fullName>Ferredoxin--NAD(+) reductase</fullName>
            <ecNumber>1.18.1.3</ecNumber>
        </recommendedName>
    </domain>
</protein>
<name>CBDC_BURCE</name>
<geneLocation type="plasmid">
    <name>pBAH1</name>
</geneLocation>
<evidence type="ECO:0000250" key="1"/>
<evidence type="ECO:0000255" key="2">
    <source>
        <dbReference type="PROSITE-ProRule" id="PRU00465"/>
    </source>
</evidence>
<evidence type="ECO:0000255" key="3">
    <source>
        <dbReference type="PROSITE-ProRule" id="PRU00716"/>
    </source>
</evidence>
<evidence type="ECO:0000305" key="4"/>
<feature type="chain" id="PRO_0000167656" description="2-halobenzoate 1,2-dioxygenase electron transfer component">
    <location>
        <begin position="1"/>
        <end position="339"/>
    </location>
</feature>
<feature type="domain" description="2Fe-2S ferredoxin-type" evidence="2">
    <location>
        <begin position="3"/>
        <end position="96"/>
    </location>
</feature>
<feature type="domain" description="FAD-binding FR-type" evidence="3">
    <location>
        <begin position="103"/>
        <end position="203"/>
    </location>
</feature>
<feature type="region of interest" description="Ferredoxin-reductase">
    <location>
        <begin position="98"/>
        <end position="336"/>
    </location>
</feature>
<feature type="binding site" evidence="2">
    <location>
        <position position="40"/>
    </location>
    <ligand>
        <name>[2Fe-2S] cluster</name>
        <dbReference type="ChEBI" id="CHEBI:190135"/>
    </ligand>
</feature>
<feature type="binding site" evidence="2">
    <location>
        <position position="45"/>
    </location>
    <ligand>
        <name>[2Fe-2S] cluster</name>
        <dbReference type="ChEBI" id="CHEBI:190135"/>
    </ligand>
</feature>
<feature type="binding site" evidence="2">
    <location>
        <position position="48"/>
    </location>
    <ligand>
        <name>[2Fe-2S] cluster</name>
        <dbReference type="ChEBI" id="CHEBI:190135"/>
    </ligand>
</feature>
<feature type="binding site" evidence="2">
    <location>
        <position position="80"/>
    </location>
    <ligand>
        <name>[2Fe-2S] cluster</name>
        <dbReference type="ChEBI" id="CHEBI:190135"/>
    </ligand>
</feature>
<gene>
    <name type="primary">cbdC</name>
</gene>
<organism>
    <name type="scientific">Burkholderia cepacia</name>
    <name type="common">Pseudomonas cepacia</name>
    <dbReference type="NCBI Taxonomy" id="292"/>
    <lineage>
        <taxon>Bacteria</taxon>
        <taxon>Pseudomonadati</taxon>
        <taxon>Pseudomonadota</taxon>
        <taxon>Betaproteobacteria</taxon>
        <taxon>Burkholderiales</taxon>
        <taxon>Burkholderiaceae</taxon>
        <taxon>Burkholderia</taxon>
        <taxon>Burkholderia cepacia complex</taxon>
    </lineage>
</organism>
<keyword id="KW-0001">2Fe-2S</keyword>
<keyword id="KW-0058">Aromatic hydrocarbons catabolism</keyword>
<keyword id="KW-0903">Direct protein sequencing</keyword>
<keyword id="KW-0274">FAD</keyword>
<keyword id="KW-0285">Flavoprotein</keyword>
<keyword id="KW-0408">Iron</keyword>
<keyword id="KW-0411">Iron-sulfur</keyword>
<keyword id="KW-0479">Metal-binding</keyword>
<keyword id="KW-0520">NAD</keyword>
<keyword id="KW-0560">Oxidoreductase</keyword>
<keyword id="KW-0614">Plasmid</keyword>
<sequence length="339" mass="37265">MLHSIALRFEDDVTYFITSSEHETVADAAYQHGIRIPLDCRNGVCGTCKGFCEHGEYDGGDYIEDALSADEAREGFVLPCQMQARTDCVVRILASSSACQVKKSTMTGQMTEIDRGSSSTLQFTLAIDPSSKVDFLPGQYAQLRIPGTTESRAYSYSSMPGSSHVTFLVRDVPNGKMSGYLRNQATITETFTFDGPYGAFYLREPVRPILMLAGGTGLAPFLSMLQYMAGLQRNDLPSVRLVYGVNRDDDLVGLDKLDELATQLSGFSYITTVVDKDSAQLRRGYVTQQITNDDMNGGDVDIYVCGPPPMVEAVRSWLAAEKLNPVNFYFEKFAPTVGN</sequence>